<accession>B6EHX0</accession>
<keyword id="KW-0028">Amino-acid biosynthesis</keyword>
<keyword id="KW-0963">Cytoplasm</keyword>
<keyword id="KW-0554">One-carbon metabolism</keyword>
<keyword id="KW-0663">Pyridoxal phosphate</keyword>
<keyword id="KW-0808">Transferase</keyword>
<sequence>MLKRDMNIADYDADLFAAIQEETVRQEEHIELIASENYTSPRVMEAQGSQLTNKYAEGYPGKRYYGGCEFVDKVETLAINRACELFGAEYANVQPHSGSQANNAVYMALLNAGDTVLGMSLAHGGHLTHGSPVNFSGKLYNIIPYGIDEAGQIDYEEMEALAIEHKPKMIIGGFSAYSQICDWARMREIADKVGAYFFVDMAHVAGLIAAGVYPNPVPHAHVVTTTTHKTLAGPRGGLILSNEGEDLYKKLNSAVFPGGQGGPLMHVIAGKAVAFKEALEPEFKEYQVRVVANAKAMVAEFLARGYNIVSGSTENHLFLVDLIDKDITGKEADAALGSANITVNKNSVPNDPRSPFVTSGIRVGSPSITRRGFSEEDAKNLAGWMCDILDNMGDESVIEATKAKVLEICKRLPVYA</sequence>
<protein>
    <recommendedName>
        <fullName evidence="1">Serine hydroxymethyltransferase</fullName>
        <shortName evidence="1">SHMT</shortName>
        <shortName evidence="1">Serine methylase</shortName>
        <ecNumber evidence="1">2.1.2.1</ecNumber>
    </recommendedName>
</protein>
<evidence type="ECO:0000255" key="1">
    <source>
        <dbReference type="HAMAP-Rule" id="MF_00051"/>
    </source>
</evidence>
<reference key="1">
    <citation type="journal article" date="2008" name="BMC Genomics">
        <title>The genome sequence of the fish pathogen Aliivibrio salmonicida strain LFI1238 shows extensive evidence of gene decay.</title>
        <authorList>
            <person name="Hjerde E."/>
            <person name="Lorentzen M.S."/>
            <person name="Holden M.T."/>
            <person name="Seeger K."/>
            <person name="Paulsen S."/>
            <person name="Bason N."/>
            <person name="Churcher C."/>
            <person name="Harris D."/>
            <person name="Norbertczak H."/>
            <person name="Quail M.A."/>
            <person name="Sanders S."/>
            <person name="Thurston S."/>
            <person name="Parkhill J."/>
            <person name="Willassen N.P."/>
            <person name="Thomson N.R."/>
        </authorList>
    </citation>
    <scope>NUCLEOTIDE SEQUENCE [LARGE SCALE GENOMIC DNA]</scope>
    <source>
        <strain>LFI1238</strain>
    </source>
</reference>
<organism>
    <name type="scientific">Aliivibrio salmonicida (strain LFI1238)</name>
    <name type="common">Vibrio salmonicida (strain LFI1238)</name>
    <dbReference type="NCBI Taxonomy" id="316275"/>
    <lineage>
        <taxon>Bacteria</taxon>
        <taxon>Pseudomonadati</taxon>
        <taxon>Pseudomonadota</taxon>
        <taxon>Gammaproteobacteria</taxon>
        <taxon>Vibrionales</taxon>
        <taxon>Vibrionaceae</taxon>
        <taxon>Aliivibrio</taxon>
    </lineage>
</organism>
<feature type="chain" id="PRO_1000091512" description="Serine hydroxymethyltransferase">
    <location>
        <begin position="1"/>
        <end position="416"/>
    </location>
</feature>
<feature type="binding site" evidence="1">
    <location>
        <position position="121"/>
    </location>
    <ligand>
        <name>(6S)-5,6,7,8-tetrahydrofolate</name>
        <dbReference type="ChEBI" id="CHEBI:57453"/>
    </ligand>
</feature>
<feature type="binding site" evidence="1">
    <location>
        <begin position="125"/>
        <end position="127"/>
    </location>
    <ligand>
        <name>(6S)-5,6,7,8-tetrahydrofolate</name>
        <dbReference type="ChEBI" id="CHEBI:57453"/>
    </ligand>
</feature>
<feature type="binding site" evidence="1">
    <location>
        <position position="245"/>
    </location>
    <ligand>
        <name>(6S)-5,6,7,8-tetrahydrofolate</name>
        <dbReference type="ChEBI" id="CHEBI:57453"/>
    </ligand>
</feature>
<feature type="binding site" evidence="1">
    <location>
        <begin position="354"/>
        <end position="356"/>
    </location>
    <ligand>
        <name>(6S)-5,6,7,8-tetrahydrofolate</name>
        <dbReference type="ChEBI" id="CHEBI:57453"/>
    </ligand>
</feature>
<feature type="site" description="Plays an important role in substrate specificity" evidence="1">
    <location>
        <position position="228"/>
    </location>
</feature>
<feature type="modified residue" description="N6-(pyridoxal phosphate)lysine" evidence="1">
    <location>
        <position position="229"/>
    </location>
</feature>
<proteinExistence type="inferred from homology"/>
<gene>
    <name evidence="1" type="primary">glyA</name>
    <name type="ordered locus">VSAL_I0864</name>
</gene>
<name>GLYA_ALISL</name>
<comment type="function">
    <text evidence="1">Catalyzes the reversible interconversion of serine and glycine with tetrahydrofolate (THF) serving as the one-carbon carrier. This reaction serves as the major source of one-carbon groups required for the biosynthesis of purines, thymidylate, methionine, and other important biomolecules. Also exhibits THF-independent aldolase activity toward beta-hydroxyamino acids, producing glycine and aldehydes, via a retro-aldol mechanism.</text>
</comment>
<comment type="catalytic activity">
    <reaction evidence="1">
        <text>(6R)-5,10-methylene-5,6,7,8-tetrahydrofolate + glycine + H2O = (6S)-5,6,7,8-tetrahydrofolate + L-serine</text>
        <dbReference type="Rhea" id="RHEA:15481"/>
        <dbReference type="ChEBI" id="CHEBI:15377"/>
        <dbReference type="ChEBI" id="CHEBI:15636"/>
        <dbReference type="ChEBI" id="CHEBI:33384"/>
        <dbReference type="ChEBI" id="CHEBI:57305"/>
        <dbReference type="ChEBI" id="CHEBI:57453"/>
        <dbReference type="EC" id="2.1.2.1"/>
    </reaction>
</comment>
<comment type="cofactor">
    <cofactor evidence="1">
        <name>pyridoxal 5'-phosphate</name>
        <dbReference type="ChEBI" id="CHEBI:597326"/>
    </cofactor>
</comment>
<comment type="pathway">
    <text evidence="1">One-carbon metabolism; tetrahydrofolate interconversion.</text>
</comment>
<comment type="pathway">
    <text evidence="1">Amino-acid biosynthesis; glycine biosynthesis; glycine from L-serine: step 1/1.</text>
</comment>
<comment type="subunit">
    <text evidence="1">Homodimer.</text>
</comment>
<comment type="subcellular location">
    <subcellularLocation>
        <location evidence="1">Cytoplasm</location>
    </subcellularLocation>
</comment>
<comment type="similarity">
    <text evidence="1">Belongs to the SHMT family.</text>
</comment>
<dbReference type="EC" id="2.1.2.1" evidence="1"/>
<dbReference type="EMBL" id="FM178379">
    <property type="protein sequence ID" value="CAQ78549.1"/>
    <property type="molecule type" value="Genomic_DNA"/>
</dbReference>
<dbReference type="RefSeq" id="WP_012549648.1">
    <property type="nucleotide sequence ID" value="NC_011312.1"/>
</dbReference>
<dbReference type="SMR" id="B6EHX0"/>
<dbReference type="KEGG" id="vsa:VSAL_I0864"/>
<dbReference type="eggNOG" id="COG0112">
    <property type="taxonomic scope" value="Bacteria"/>
</dbReference>
<dbReference type="HOGENOM" id="CLU_022477_2_1_6"/>
<dbReference type="UniPathway" id="UPA00193"/>
<dbReference type="UniPathway" id="UPA00288">
    <property type="reaction ID" value="UER01023"/>
</dbReference>
<dbReference type="Proteomes" id="UP000001730">
    <property type="component" value="Chromosome 1"/>
</dbReference>
<dbReference type="GO" id="GO:0005829">
    <property type="term" value="C:cytosol"/>
    <property type="evidence" value="ECO:0007669"/>
    <property type="project" value="TreeGrafter"/>
</dbReference>
<dbReference type="GO" id="GO:0004372">
    <property type="term" value="F:glycine hydroxymethyltransferase activity"/>
    <property type="evidence" value="ECO:0007669"/>
    <property type="project" value="UniProtKB-UniRule"/>
</dbReference>
<dbReference type="GO" id="GO:0030170">
    <property type="term" value="F:pyridoxal phosphate binding"/>
    <property type="evidence" value="ECO:0007669"/>
    <property type="project" value="UniProtKB-UniRule"/>
</dbReference>
<dbReference type="GO" id="GO:0019264">
    <property type="term" value="P:glycine biosynthetic process from serine"/>
    <property type="evidence" value="ECO:0007669"/>
    <property type="project" value="UniProtKB-UniRule"/>
</dbReference>
<dbReference type="GO" id="GO:0035999">
    <property type="term" value="P:tetrahydrofolate interconversion"/>
    <property type="evidence" value="ECO:0007669"/>
    <property type="project" value="UniProtKB-UniRule"/>
</dbReference>
<dbReference type="CDD" id="cd00378">
    <property type="entry name" value="SHMT"/>
    <property type="match status" value="1"/>
</dbReference>
<dbReference type="FunFam" id="3.40.640.10:FF:000001">
    <property type="entry name" value="Serine hydroxymethyltransferase"/>
    <property type="match status" value="1"/>
</dbReference>
<dbReference type="FunFam" id="3.90.1150.10:FF:000003">
    <property type="entry name" value="Serine hydroxymethyltransferase"/>
    <property type="match status" value="1"/>
</dbReference>
<dbReference type="Gene3D" id="3.90.1150.10">
    <property type="entry name" value="Aspartate Aminotransferase, domain 1"/>
    <property type="match status" value="1"/>
</dbReference>
<dbReference type="Gene3D" id="3.40.640.10">
    <property type="entry name" value="Type I PLP-dependent aspartate aminotransferase-like (Major domain)"/>
    <property type="match status" value="1"/>
</dbReference>
<dbReference type="HAMAP" id="MF_00051">
    <property type="entry name" value="SHMT"/>
    <property type="match status" value="1"/>
</dbReference>
<dbReference type="InterPro" id="IPR015424">
    <property type="entry name" value="PyrdxlP-dep_Trfase"/>
</dbReference>
<dbReference type="InterPro" id="IPR015421">
    <property type="entry name" value="PyrdxlP-dep_Trfase_major"/>
</dbReference>
<dbReference type="InterPro" id="IPR015422">
    <property type="entry name" value="PyrdxlP-dep_Trfase_small"/>
</dbReference>
<dbReference type="InterPro" id="IPR001085">
    <property type="entry name" value="Ser_HO-MeTrfase"/>
</dbReference>
<dbReference type="InterPro" id="IPR049943">
    <property type="entry name" value="Ser_HO-MeTrfase-like"/>
</dbReference>
<dbReference type="InterPro" id="IPR019798">
    <property type="entry name" value="Ser_HO-MeTrfase_PLP_BS"/>
</dbReference>
<dbReference type="InterPro" id="IPR039429">
    <property type="entry name" value="SHMT-like_dom"/>
</dbReference>
<dbReference type="NCBIfam" id="NF000586">
    <property type="entry name" value="PRK00011.1"/>
    <property type="match status" value="1"/>
</dbReference>
<dbReference type="PANTHER" id="PTHR11680">
    <property type="entry name" value="SERINE HYDROXYMETHYLTRANSFERASE"/>
    <property type="match status" value="1"/>
</dbReference>
<dbReference type="PANTHER" id="PTHR11680:SF50">
    <property type="entry name" value="SERINE HYDROXYMETHYLTRANSFERASE"/>
    <property type="match status" value="1"/>
</dbReference>
<dbReference type="Pfam" id="PF00464">
    <property type="entry name" value="SHMT"/>
    <property type="match status" value="1"/>
</dbReference>
<dbReference type="PIRSF" id="PIRSF000412">
    <property type="entry name" value="SHMT"/>
    <property type="match status" value="1"/>
</dbReference>
<dbReference type="SUPFAM" id="SSF53383">
    <property type="entry name" value="PLP-dependent transferases"/>
    <property type="match status" value="1"/>
</dbReference>
<dbReference type="PROSITE" id="PS00096">
    <property type="entry name" value="SHMT"/>
    <property type="match status" value="1"/>
</dbReference>